<gene>
    <name type="primary">KTR3</name>
    <name type="ordered locus">YBR205W</name>
    <name type="ORF">YBR1445</name>
</gene>
<dbReference type="EC" id="2.4.1.-"/>
<dbReference type="EMBL" id="Z21487">
    <property type="protein sequence ID" value="CAA79693.1"/>
    <property type="molecule type" value="Genomic_DNA"/>
</dbReference>
<dbReference type="EMBL" id="Z36074">
    <property type="protein sequence ID" value="CAA85169.1"/>
    <property type="molecule type" value="Genomic_DNA"/>
</dbReference>
<dbReference type="EMBL" id="AY693211">
    <property type="protein sequence ID" value="AAT93230.1"/>
    <property type="molecule type" value="Genomic_DNA"/>
</dbReference>
<dbReference type="EMBL" id="BK006936">
    <property type="protein sequence ID" value="DAA07323.1"/>
    <property type="molecule type" value="Genomic_DNA"/>
</dbReference>
<dbReference type="PIR" id="S34031">
    <property type="entry name" value="S34031"/>
</dbReference>
<dbReference type="RefSeq" id="NP_009764.3">
    <property type="nucleotide sequence ID" value="NM_001178553.3"/>
</dbReference>
<dbReference type="SMR" id="P38130"/>
<dbReference type="BioGRID" id="32902">
    <property type="interactions" value="107"/>
</dbReference>
<dbReference type="DIP" id="DIP-1723N"/>
<dbReference type="FunCoup" id="P38130">
    <property type="interactions" value="217"/>
</dbReference>
<dbReference type="IntAct" id="P38130">
    <property type="interactions" value="43"/>
</dbReference>
<dbReference type="MINT" id="P38130"/>
<dbReference type="STRING" id="4932.YBR205W"/>
<dbReference type="CAZy" id="GT15">
    <property type="family name" value="Glycosyltransferase Family 15"/>
</dbReference>
<dbReference type="iPTMnet" id="P38130"/>
<dbReference type="PaxDb" id="4932-YBR205W"/>
<dbReference type="PeptideAtlas" id="P38130"/>
<dbReference type="EnsemblFungi" id="YBR205W_mRNA">
    <property type="protein sequence ID" value="YBR205W"/>
    <property type="gene ID" value="YBR205W"/>
</dbReference>
<dbReference type="GeneID" id="852504"/>
<dbReference type="KEGG" id="sce:YBR205W"/>
<dbReference type="AGR" id="SGD:S000000409"/>
<dbReference type="SGD" id="S000000409">
    <property type="gene designation" value="KTR3"/>
</dbReference>
<dbReference type="VEuPathDB" id="FungiDB:YBR205W"/>
<dbReference type="eggNOG" id="KOG4472">
    <property type="taxonomic scope" value="Eukaryota"/>
</dbReference>
<dbReference type="GeneTree" id="ENSGT00940000176287"/>
<dbReference type="HOGENOM" id="CLU_024327_0_0_1"/>
<dbReference type="InParanoid" id="P38130"/>
<dbReference type="OMA" id="YCDIQYD"/>
<dbReference type="OrthoDB" id="439943at2759"/>
<dbReference type="BioCyc" id="MetaCyc:G3O-29145-MONOMER"/>
<dbReference type="BioCyc" id="YEAST:G3O-29145-MONOMER"/>
<dbReference type="BioGRID-ORCS" id="852504">
    <property type="hits" value="4 hits in 10 CRISPR screens"/>
</dbReference>
<dbReference type="PRO" id="PR:P38130"/>
<dbReference type="Proteomes" id="UP000002311">
    <property type="component" value="Chromosome II"/>
</dbReference>
<dbReference type="RNAct" id="P38130">
    <property type="molecule type" value="protein"/>
</dbReference>
<dbReference type="GO" id="GO:0005737">
    <property type="term" value="C:cytoplasm"/>
    <property type="evidence" value="ECO:0007005"/>
    <property type="project" value="SGD"/>
</dbReference>
<dbReference type="GO" id="GO:0000324">
    <property type="term" value="C:fungal-type vacuole"/>
    <property type="evidence" value="ECO:0007005"/>
    <property type="project" value="SGD"/>
</dbReference>
<dbReference type="GO" id="GO:0000329">
    <property type="term" value="C:fungal-type vacuole membrane"/>
    <property type="evidence" value="ECO:0007005"/>
    <property type="project" value="SGD"/>
</dbReference>
<dbReference type="GO" id="GO:0005794">
    <property type="term" value="C:Golgi apparatus"/>
    <property type="evidence" value="ECO:0000318"/>
    <property type="project" value="GO_Central"/>
</dbReference>
<dbReference type="GO" id="GO:0005634">
    <property type="term" value="C:nucleus"/>
    <property type="evidence" value="ECO:0007005"/>
    <property type="project" value="SGD"/>
</dbReference>
<dbReference type="GO" id="GO:0000026">
    <property type="term" value="F:alpha-1,2-mannosyltransferase activity"/>
    <property type="evidence" value="ECO:0000318"/>
    <property type="project" value="GO_Central"/>
</dbReference>
<dbReference type="GO" id="GO:0000030">
    <property type="term" value="F:mannosyltransferase activity"/>
    <property type="evidence" value="ECO:0000315"/>
    <property type="project" value="SGD"/>
</dbReference>
<dbReference type="GO" id="GO:0000032">
    <property type="term" value="P:cell wall mannoprotein biosynthetic process"/>
    <property type="evidence" value="ECO:0000318"/>
    <property type="project" value="GO_Central"/>
</dbReference>
<dbReference type="GO" id="GO:0006491">
    <property type="term" value="P:N-glycan processing"/>
    <property type="evidence" value="ECO:0000316"/>
    <property type="project" value="SGD"/>
</dbReference>
<dbReference type="GO" id="GO:0006487">
    <property type="term" value="P:protein N-linked glycosylation"/>
    <property type="evidence" value="ECO:0000318"/>
    <property type="project" value="GO_Central"/>
</dbReference>
<dbReference type="GO" id="GO:0006493">
    <property type="term" value="P:protein O-linked glycosylation"/>
    <property type="evidence" value="ECO:0000316"/>
    <property type="project" value="SGD"/>
</dbReference>
<dbReference type="FunFam" id="3.90.550.10:FF:000051">
    <property type="entry name" value="Alpha-1,2-mannosyltransferase (Ktr4)"/>
    <property type="match status" value="1"/>
</dbReference>
<dbReference type="Gene3D" id="3.90.550.10">
    <property type="entry name" value="Spore Coat Polysaccharide Biosynthesis Protein SpsA, Chain A"/>
    <property type="match status" value="1"/>
</dbReference>
<dbReference type="InterPro" id="IPR002685">
    <property type="entry name" value="Glyco_trans_15"/>
</dbReference>
<dbReference type="InterPro" id="IPR029044">
    <property type="entry name" value="Nucleotide-diphossugar_trans"/>
</dbReference>
<dbReference type="PANTHER" id="PTHR31121">
    <property type="entry name" value="ALPHA-1,2 MANNOSYLTRANSFERASE KTR1"/>
    <property type="match status" value="1"/>
</dbReference>
<dbReference type="PANTHER" id="PTHR31121:SF11">
    <property type="entry name" value="MANNOSYLTRANSFERASE KTR3-RELATED"/>
    <property type="match status" value="1"/>
</dbReference>
<dbReference type="Pfam" id="PF01793">
    <property type="entry name" value="Glyco_transf_15"/>
    <property type="match status" value="1"/>
</dbReference>
<dbReference type="SUPFAM" id="SSF53448">
    <property type="entry name" value="Nucleotide-diphospho-sugar transferases"/>
    <property type="match status" value="1"/>
</dbReference>
<proteinExistence type="evidence at protein level"/>
<evidence type="ECO:0000250" key="1"/>
<evidence type="ECO:0000255" key="2"/>
<evidence type="ECO:0000269" key="3">
    <source>
    </source>
</evidence>
<evidence type="ECO:0000269" key="4">
    <source>
    </source>
</evidence>
<evidence type="ECO:0000305" key="5"/>
<sequence length="404" mass="47482">MSVHHKKKLMPKSALLIRKYQKGIRSSFIGLIIVLSFLFFMSGSRSPEVPIAQGTSVSRVASKDYLMPFTDKSQGVIHPVDDGKKEKGVMVTLARNSDLWNLVKSIRHVEDRFNNRYHYDWVFLNDQPFSDEFKRVTSALVSGKAKYGTIPKDHWSIPSWIDTEKFDEKRLAMGKLDIPYGSSVPYRHMCRFQSGFIWRHPLLEEYEWFWRVDTDITLFCDIQYDIFKFLKVNNKKYGFILSVSEYERTIPTLWETTKKFIKKNPKFLHKNNLMKFISNDDGDTYNMCHFWTNFEIGSLDFFRSDAYREYFDYLDSSGGFFYERWGDAPVHSIAASLFLDKSEIHFFDGLGFHHPDFTSCPIEQKIRLQNKCICEPSKDVTWTPDYFCTRKYFSAGNYKLPPGI</sequence>
<feature type="chain" id="PRO_0000208244" description="Probable mannosyltransferase KTR3">
    <location>
        <begin position="1"/>
        <end position="404"/>
    </location>
</feature>
<feature type="topological domain" description="Cytoplasmic" evidence="2">
    <location>
        <begin position="1"/>
        <end position="27"/>
    </location>
</feature>
<feature type="transmembrane region" description="Helical; Signal-anchor for type II membrane protein">
    <location>
        <begin position="28"/>
        <end position="44"/>
    </location>
</feature>
<feature type="topological domain" description="Lumenal" evidence="2">
    <location>
        <begin position="45"/>
        <end position="404"/>
    </location>
</feature>
<feature type="region of interest" description="Stem region" evidence="1">
    <location>
        <begin position="45"/>
        <end position="83"/>
    </location>
</feature>
<feature type="region of interest" description="Catalytic" evidence="1">
    <location>
        <begin position="84"/>
        <end position="404"/>
    </location>
</feature>
<feature type="active site" description="Nucleophile" evidence="2">
    <location>
        <position position="295"/>
    </location>
</feature>
<feature type="sequence conflict" description="In Ref. 4; AAT93230." evidence="5" ref="4">
    <original>W</original>
    <variation>R</variation>
    <location>
        <position position="100"/>
    </location>
</feature>
<organism>
    <name type="scientific">Saccharomyces cerevisiae (strain ATCC 204508 / S288c)</name>
    <name type="common">Baker's yeast</name>
    <dbReference type="NCBI Taxonomy" id="559292"/>
    <lineage>
        <taxon>Eukaryota</taxon>
        <taxon>Fungi</taxon>
        <taxon>Dikarya</taxon>
        <taxon>Ascomycota</taxon>
        <taxon>Saccharomycotina</taxon>
        <taxon>Saccharomycetes</taxon>
        <taxon>Saccharomycetales</taxon>
        <taxon>Saccharomycetaceae</taxon>
        <taxon>Saccharomyces</taxon>
    </lineage>
</organism>
<keyword id="KW-0328">Glycosyltransferase</keyword>
<keyword id="KW-0472">Membrane</keyword>
<keyword id="KW-1185">Reference proteome</keyword>
<keyword id="KW-0735">Signal-anchor</keyword>
<keyword id="KW-0808">Transferase</keyword>
<keyword id="KW-0812">Transmembrane</keyword>
<keyword id="KW-1133">Transmembrane helix</keyword>
<name>KTR3_YEAST</name>
<protein>
    <recommendedName>
        <fullName>Probable mannosyltransferase KTR3</fullName>
        <ecNumber>2.4.1.-</ecNumber>
    </recommendedName>
</protein>
<reference key="1">
    <citation type="journal article" date="1993" name="Yeast">
        <title>A 12.8 kb segment, on the right arm of chromosome II from Saccharomyces cerevisiae including part of the DUR1,2 gene, contains five putative new genes.</title>
        <authorList>
            <person name="Bussereau F."/>
            <person name="Mallet L."/>
            <person name="Gaillon L."/>
            <person name="Jacquet M."/>
        </authorList>
    </citation>
    <scope>NUCLEOTIDE SEQUENCE [GENOMIC DNA]</scope>
    <source>
        <strain>ATCC 204508 / S288c</strain>
    </source>
</reference>
<reference key="2">
    <citation type="journal article" date="1994" name="EMBO J.">
        <title>Complete DNA sequence of yeast chromosome II.</title>
        <authorList>
            <person name="Feldmann H."/>
            <person name="Aigle M."/>
            <person name="Aljinovic G."/>
            <person name="Andre B."/>
            <person name="Baclet M.C."/>
            <person name="Barthe C."/>
            <person name="Baur A."/>
            <person name="Becam A.-M."/>
            <person name="Biteau N."/>
            <person name="Boles E."/>
            <person name="Brandt T."/>
            <person name="Brendel M."/>
            <person name="Brueckner M."/>
            <person name="Bussereau F."/>
            <person name="Christiansen C."/>
            <person name="Contreras R."/>
            <person name="Crouzet M."/>
            <person name="Cziepluch C."/>
            <person name="Demolis N."/>
            <person name="Delaveau T."/>
            <person name="Doignon F."/>
            <person name="Domdey H."/>
            <person name="Duesterhus S."/>
            <person name="Dubois E."/>
            <person name="Dujon B."/>
            <person name="El Bakkoury M."/>
            <person name="Entian K.-D."/>
            <person name="Feuermann M."/>
            <person name="Fiers W."/>
            <person name="Fobo G.M."/>
            <person name="Fritz C."/>
            <person name="Gassenhuber J."/>
            <person name="Glansdorff N."/>
            <person name="Goffeau A."/>
            <person name="Grivell L.A."/>
            <person name="de Haan M."/>
            <person name="Hein C."/>
            <person name="Herbert C.J."/>
            <person name="Hollenberg C.P."/>
            <person name="Holmstroem K."/>
            <person name="Jacq C."/>
            <person name="Jacquet M."/>
            <person name="Jauniaux J.-C."/>
            <person name="Jonniaux J.-L."/>
            <person name="Kallesoee T."/>
            <person name="Kiesau P."/>
            <person name="Kirchrath L."/>
            <person name="Koetter P."/>
            <person name="Korol S."/>
            <person name="Liebl S."/>
            <person name="Logghe M."/>
            <person name="Lohan A.J.E."/>
            <person name="Louis E.J."/>
            <person name="Li Z.Y."/>
            <person name="Maat M.J."/>
            <person name="Mallet L."/>
            <person name="Mannhaupt G."/>
            <person name="Messenguy F."/>
            <person name="Miosga T."/>
            <person name="Molemans F."/>
            <person name="Mueller S."/>
            <person name="Nasr F."/>
            <person name="Obermaier B."/>
            <person name="Perea J."/>
            <person name="Pierard A."/>
            <person name="Piravandi E."/>
            <person name="Pohl F.M."/>
            <person name="Pohl T.M."/>
            <person name="Potier S."/>
            <person name="Proft M."/>
            <person name="Purnelle B."/>
            <person name="Ramezani Rad M."/>
            <person name="Rieger M."/>
            <person name="Rose M."/>
            <person name="Schaaff-Gerstenschlaeger I."/>
            <person name="Scherens B."/>
            <person name="Schwarzlose C."/>
            <person name="Skala J."/>
            <person name="Slonimski P.P."/>
            <person name="Smits P.H.M."/>
            <person name="Souciet J.-L."/>
            <person name="Steensma H.Y."/>
            <person name="Stucka R."/>
            <person name="Urrestarazu L.A."/>
            <person name="van der Aart Q.J.M."/>
            <person name="Van Dyck L."/>
            <person name="Vassarotti A."/>
            <person name="Vetter I."/>
            <person name="Vierendeels F."/>
            <person name="Vissers S."/>
            <person name="Wagner G."/>
            <person name="de Wergifosse P."/>
            <person name="Wolfe K.H."/>
            <person name="Zagulski M."/>
            <person name="Zimmermann F.K."/>
            <person name="Mewes H.-W."/>
            <person name="Kleine K."/>
        </authorList>
    </citation>
    <scope>NUCLEOTIDE SEQUENCE [LARGE SCALE GENOMIC DNA]</scope>
    <source>
        <strain>ATCC 204508 / S288c</strain>
    </source>
</reference>
<reference key="3">
    <citation type="journal article" date="2014" name="G3 (Bethesda)">
        <title>The reference genome sequence of Saccharomyces cerevisiae: Then and now.</title>
        <authorList>
            <person name="Engel S.R."/>
            <person name="Dietrich F.S."/>
            <person name="Fisk D.G."/>
            <person name="Binkley G."/>
            <person name="Balakrishnan R."/>
            <person name="Costanzo M.C."/>
            <person name="Dwight S.S."/>
            <person name="Hitz B.C."/>
            <person name="Karra K."/>
            <person name="Nash R.S."/>
            <person name="Weng S."/>
            <person name="Wong E.D."/>
            <person name="Lloyd P."/>
            <person name="Skrzypek M.S."/>
            <person name="Miyasato S.R."/>
            <person name="Simison M."/>
            <person name="Cherry J.M."/>
        </authorList>
    </citation>
    <scope>GENOME REANNOTATION</scope>
    <source>
        <strain>ATCC 204508 / S288c</strain>
    </source>
</reference>
<reference key="4">
    <citation type="journal article" date="2007" name="Genome Res.">
        <title>Approaching a complete repository of sequence-verified protein-encoding clones for Saccharomyces cerevisiae.</title>
        <authorList>
            <person name="Hu Y."/>
            <person name="Rolfs A."/>
            <person name="Bhullar B."/>
            <person name="Murthy T.V.S."/>
            <person name="Zhu C."/>
            <person name="Berger M.F."/>
            <person name="Camargo A.A."/>
            <person name="Kelley F."/>
            <person name="McCarron S."/>
            <person name="Jepson D."/>
            <person name="Richardson A."/>
            <person name="Raphael J."/>
            <person name="Moreira D."/>
            <person name="Taycher E."/>
            <person name="Zuo D."/>
            <person name="Mohr S."/>
            <person name="Kane M.F."/>
            <person name="Williamson J."/>
            <person name="Simpson A.J.G."/>
            <person name="Bulyk M.L."/>
            <person name="Harlow E."/>
            <person name="Marsischky G."/>
            <person name="Kolodner R.D."/>
            <person name="LaBaer J."/>
        </authorList>
    </citation>
    <scope>NUCLEOTIDE SEQUENCE [GENOMIC DNA]</scope>
    <source>
        <strain>ATCC 204508 / S288c</strain>
    </source>
</reference>
<reference key="5">
    <citation type="journal article" date="2003" name="Nature">
        <title>Global analysis of protein expression in yeast.</title>
        <authorList>
            <person name="Ghaemmaghami S."/>
            <person name="Huh W.-K."/>
            <person name="Bower K."/>
            <person name="Howson R.W."/>
            <person name="Belle A."/>
            <person name="Dephoure N."/>
            <person name="O'Shea E.K."/>
            <person name="Weissman J.S."/>
        </authorList>
    </citation>
    <scope>LEVEL OF PROTEIN EXPRESSION [LARGE SCALE ANALYSIS]</scope>
</reference>
<reference key="6">
    <citation type="journal article" date="2005" name="Mol. Cell. Biol.">
        <title>Immunoisolation of the yeast Golgi subcompartments and characterization of a novel membrane protein, Svp26, discovered in the Sed5-containing compartments.</title>
        <authorList>
            <person name="Inadome H."/>
            <person name="Noda Y."/>
            <person name="Adachi H."/>
            <person name="Yoda K."/>
        </authorList>
    </citation>
    <scope>INTERACTION WITH SVP26</scope>
</reference>
<accession>P38130</accession>
<accession>D6VQK3</accession>
<accession>E9P931</accession>
<comment type="function">
    <text>Possible glycosyltransferase that transfers an alpha-D-mannosyl residue from GDP-mannose into lipid-linked oligosaccharide, forming an alpha-(1-&gt;2)-D-mannosyl-D-mannose linkage.</text>
</comment>
<comment type="subunit">
    <text evidence="4">Interacts with SVP26.</text>
</comment>
<comment type="subcellular location">
    <subcellularLocation>
        <location evidence="5">Membrane</location>
        <topology evidence="5">Single-pass type II membrane protein</topology>
    </subcellularLocation>
</comment>
<comment type="miscellaneous">
    <text evidence="3">Present with 704 molecules/cell in log phase SD medium.</text>
</comment>
<comment type="similarity">
    <text evidence="5">Belongs to the glycosyltransferase 15 family.</text>
</comment>